<comment type="function">
    <text evidence="1">Involved in the synthesis of autoinducer 2 (AI-2) which is secreted by bacteria and is used to communicate both the cell density and the metabolic potential of the environment. The regulation of gene expression in response to changes in cell density is called quorum sensing. Catalyzes the transformation of S-ribosylhomocysteine (RHC) to homocysteine (HC) and 4,5-dihydroxy-2,3-pentadione (DPD).</text>
</comment>
<comment type="catalytic activity">
    <reaction evidence="1">
        <text>S-(5-deoxy-D-ribos-5-yl)-L-homocysteine = (S)-4,5-dihydroxypentane-2,3-dione + L-homocysteine</text>
        <dbReference type="Rhea" id="RHEA:17753"/>
        <dbReference type="ChEBI" id="CHEBI:29484"/>
        <dbReference type="ChEBI" id="CHEBI:58195"/>
        <dbReference type="ChEBI" id="CHEBI:58199"/>
        <dbReference type="EC" id="4.4.1.21"/>
    </reaction>
</comment>
<comment type="cofactor">
    <cofactor evidence="1">
        <name>Fe cation</name>
        <dbReference type="ChEBI" id="CHEBI:24875"/>
    </cofactor>
    <text evidence="1">Binds 1 Fe cation per subunit.</text>
</comment>
<comment type="subunit">
    <text evidence="1">Homodimer.</text>
</comment>
<comment type="similarity">
    <text evidence="1">Belongs to the LuxS family.</text>
</comment>
<proteinExistence type="inferred from homology"/>
<reference key="1">
    <citation type="submission" date="2009-04" db="EMBL/GenBank/DDBJ databases">
        <title>Genome sequence of Bacillus anthracis A0248.</title>
        <authorList>
            <person name="Dodson R.J."/>
            <person name="Munk A.C."/>
            <person name="Bruce D."/>
            <person name="Detter C."/>
            <person name="Tapia R."/>
            <person name="Sutton G."/>
            <person name="Sims D."/>
            <person name="Brettin T."/>
        </authorList>
    </citation>
    <scope>NUCLEOTIDE SEQUENCE [LARGE SCALE GENOMIC DNA]</scope>
    <source>
        <strain>A0248</strain>
    </source>
</reference>
<gene>
    <name evidence="1" type="primary">luxS</name>
    <name type="ordered locus">BAA_5058</name>
</gene>
<feature type="chain" id="PRO_1000118531" description="S-ribosylhomocysteine lyase">
    <location>
        <begin position="1"/>
        <end position="157"/>
    </location>
</feature>
<feature type="binding site" evidence="1">
    <location>
        <position position="54"/>
    </location>
    <ligand>
        <name>Fe cation</name>
        <dbReference type="ChEBI" id="CHEBI:24875"/>
    </ligand>
</feature>
<feature type="binding site" evidence="1">
    <location>
        <position position="58"/>
    </location>
    <ligand>
        <name>Fe cation</name>
        <dbReference type="ChEBI" id="CHEBI:24875"/>
    </ligand>
</feature>
<feature type="binding site" evidence="1">
    <location>
        <position position="126"/>
    </location>
    <ligand>
        <name>Fe cation</name>
        <dbReference type="ChEBI" id="CHEBI:24875"/>
    </ligand>
</feature>
<keyword id="KW-0071">Autoinducer synthesis</keyword>
<keyword id="KW-0408">Iron</keyword>
<keyword id="KW-0456">Lyase</keyword>
<keyword id="KW-0479">Metal-binding</keyword>
<keyword id="KW-0673">Quorum sensing</keyword>
<evidence type="ECO:0000255" key="1">
    <source>
        <dbReference type="HAMAP-Rule" id="MF_00091"/>
    </source>
</evidence>
<dbReference type="EC" id="4.4.1.21" evidence="1"/>
<dbReference type="EMBL" id="CP001598">
    <property type="protein sequence ID" value="ACQ47033.1"/>
    <property type="molecule type" value="Genomic_DNA"/>
</dbReference>
<dbReference type="RefSeq" id="WP_001141369.1">
    <property type="nucleotide sequence ID" value="NC_012659.1"/>
</dbReference>
<dbReference type="SMR" id="C3PCE7"/>
<dbReference type="GeneID" id="93006297"/>
<dbReference type="KEGG" id="bai:BAA_5058"/>
<dbReference type="HOGENOM" id="CLU_107531_2_0_9"/>
<dbReference type="GO" id="GO:0005506">
    <property type="term" value="F:iron ion binding"/>
    <property type="evidence" value="ECO:0007669"/>
    <property type="project" value="InterPro"/>
</dbReference>
<dbReference type="GO" id="GO:0043768">
    <property type="term" value="F:S-ribosylhomocysteine lyase activity"/>
    <property type="evidence" value="ECO:0007669"/>
    <property type="project" value="UniProtKB-UniRule"/>
</dbReference>
<dbReference type="GO" id="GO:0009372">
    <property type="term" value="P:quorum sensing"/>
    <property type="evidence" value="ECO:0007669"/>
    <property type="project" value="UniProtKB-UniRule"/>
</dbReference>
<dbReference type="Gene3D" id="3.30.1360.80">
    <property type="entry name" value="S-ribosylhomocysteinase (LuxS)"/>
    <property type="match status" value="1"/>
</dbReference>
<dbReference type="HAMAP" id="MF_00091">
    <property type="entry name" value="LuxS"/>
    <property type="match status" value="1"/>
</dbReference>
<dbReference type="InterPro" id="IPR037005">
    <property type="entry name" value="LuxS_sf"/>
</dbReference>
<dbReference type="InterPro" id="IPR011249">
    <property type="entry name" value="Metalloenz_LuxS/M16"/>
</dbReference>
<dbReference type="InterPro" id="IPR003815">
    <property type="entry name" value="S-ribosylhomocysteinase"/>
</dbReference>
<dbReference type="NCBIfam" id="NF002603">
    <property type="entry name" value="PRK02260.1-3"/>
    <property type="match status" value="1"/>
</dbReference>
<dbReference type="PANTHER" id="PTHR35799">
    <property type="entry name" value="S-RIBOSYLHOMOCYSTEINE LYASE"/>
    <property type="match status" value="1"/>
</dbReference>
<dbReference type="PANTHER" id="PTHR35799:SF1">
    <property type="entry name" value="S-RIBOSYLHOMOCYSTEINE LYASE"/>
    <property type="match status" value="1"/>
</dbReference>
<dbReference type="Pfam" id="PF02664">
    <property type="entry name" value="LuxS"/>
    <property type="match status" value="1"/>
</dbReference>
<dbReference type="PIRSF" id="PIRSF006160">
    <property type="entry name" value="AI2"/>
    <property type="match status" value="1"/>
</dbReference>
<dbReference type="PRINTS" id="PR01487">
    <property type="entry name" value="LUXSPROTEIN"/>
</dbReference>
<dbReference type="SUPFAM" id="SSF63411">
    <property type="entry name" value="LuxS/MPP-like metallohydrolase"/>
    <property type="match status" value="1"/>
</dbReference>
<sequence length="157" mass="17856">MPSVESFELDHTIVKAPYVRHCGVHNVGSDGIVNKFDIRFCQPNKQAMKPDVIHTLEHLLAFNLRKYIDRYPHFDIIDISPMGCQTGYYLVVSGTPTVREIIDLLELTLKDAVQITEIPAANETQCGQAKLHDLEGAKRLMNFWLSQDKDELEKVFG</sequence>
<accession>C3PCE7</accession>
<name>LUXS_BACAA</name>
<organism>
    <name type="scientific">Bacillus anthracis (strain A0248)</name>
    <dbReference type="NCBI Taxonomy" id="592021"/>
    <lineage>
        <taxon>Bacteria</taxon>
        <taxon>Bacillati</taxon>
        <taxon>Bacillota</taxon>
        <taxon>Bacilli</taxon>
        <taxon>Bacillales</taxon>
        <taxon>Bacillaceae</taxon>
        <taxon>Bacillus</taxon>
        <taxon>Bacillus cereus group</taxon>
    </lineage>
</organism>
<protein>
    <recommendedName>
        <fullName evidence="1">S-ribosylhomocysteine lyase</fullName>
        <ecNumber evidence="1">4.4.1.21</ecNumber>
    </recommendedName>
    <alternativeName>
        <fullName evidence="1">AI-2 synthesis protein</fullName>
    </alternativeName>
    <alternativeName>
        <fullName evidence="1">Autoinducer-2 production protein LuxS</fullName>
    </alternativeName>
</protein>